<name>TRPD_STAA8</name>
<proteinExistence type="inferred from homology"/>
<evidence type="ECO:0000255" key="1">
    <source>
        <dbReference type="HAMAP-Rule" id="MF_00211"/>
    </source>
</evidence>
<gene>
    <name evidence="1" type="primary">trpD</name>
    <name type="ordered locus">SAOUHSC_01368</name>
</gene>
<organism>
    <name type="scientific">Staphylococcus aureus (strain NCTC 8325 / PS 47)</name>
    <dbReference type="NCBI Taxonomy" id="93061"/>
    <lineage>
        <taxon>Bacteria</taxon>
        <taxon>Bacillati</taxon>
        <taxon>Bacillota</taxon>
        <taxon>Bacilli</taxon>
        <taxon>Bacillales</taxon>
        <taxon>Staphylococcaceae</taxon>
        <taxon>Staphylococcus</taxon>
    </lineage>
</organism>
<accession>Q2FYR7</accession>
<reference key="1">
    <citation type="book" date="2006" name="Gram positive pathogens, 2nd edition">
        <title>The Staphylococcus aureus NCTC 8325 genome.</title>
        <editorList>
            <person name="Fischetti V."/>
            <person name="Novick R."/>
            <person name="Ferretti J."/>
            <person name="Portnoy D."/>
            <person name="Rood J."/>
        </editorList>
        <authorList>
            <person name="Gillaspy A.F."/>
            <person name="Worrell V."/>
            <person name="Orvis J."/>
            <person name="Roe B.A."/>
            <person name="Dyer D.W."/>
            <person name="Iandolo J.J."/>
        </authorList>
    </citation>
    <scope>NUCLEOTIDE SEQUENCE [LARGE SCALE GENOMIC DNA]</scope>
    <source>
        <strain>NCTC 8325 / PS 47</strain>
    </source>
</reference>
<comment type="function">
    <text evidence="1">Catalyzes the transfer of the phosphoribosyl group of 5-phosphorylribose-1-pyrophosphate (PRPP) to anthranilate to yield N-(5'-phosphoribosyl)-anthranilate (PRA).</text>
</comment>
<comment type="catalytic activity">
    <reaction evidence="1">
        <text>N-(5-phospho-beta-D-ribosyl)anthranilate + diphosphate = 5-phospho-alpha-D-ribose 1-diphosphate + anthranilate</text>
        <dbReference type="Rhea" id="RHEA:11768"/>
        <dbReference type="ChEBI" id="CHEBI:16567"/>
        <dbReference type="ChEBI" id="CHEBI:18277"/>
        <dbReference type="ChEBI" id="CHEBI:33019"/>
        <dbReference type="ChEBI" id="CHEBI:58017"/>
        <dbReference type="EC" id="2.4.2.18"/>
    </reaction>
</comment>
<comment type="cofactor">
    <cofactor evidence="1">
        <name>Mg(2+)</name>
        <dbReference type="ChEBI" id="CHEBI:18420"/>
    </cofactor>
    <text evidence="1">Binds 2 magnesium ions per monomer.</text>
</comment>
<comment type="pathway">
    <text evidence="1">Amino-acid biosynthesis; L-tryptophan biosynthesis; L-tryptophan from chorismate: step 2/5.</text>
</comment>
<comment type="subunit">
    <text evidence="1">Homodimer.</text>
</comment>
<comment type="similarity">
    <text evidence="1">Belongs to the anthranilate phosphoribosyltransferase family.</text>
</comment>
<keyword id="KW-0028">Amino-acid biosynthesis</keyword>
<keyword id="KW-0057">Aromatic amino acid biosynthesis</keyword>
<keyword id="KW-0328">Glycosyltransferase</keyword>
<keyword id="KW-0460">Magnesium</keyword>
<keyword id="KW-0479">Metal-binding</keyword>
<keyword id="KW-1185">Reference proteome</keyword>
<keyword id="KW-0808">Transferase</keyword>
<keyword id="KW-0822">Tryptophan biosynthesis</keyword>
<sequence length="332" mass="36527">MTLLTRIKTETILLESDIKELIDILISPSIGTDIKYELLSSYSEREIQQQELTYIVRSLINTMYPHQPCYEGAMCVCGTGGDKSNSFNISTTVAFVVASAGVKVIKHGNKSITSNSGSTDLLNQMNIQTTTVDDTPNQLNEKDLVFIGATESYPIMKYMQPVRKMIGKPTILNLVGPLINPYHLTYQMVGVFDPTKLKLVAKTIKDLGRKRAIVLHGANGMDEATLSGDNLIYELTEDGEIKNYTLNATDYGLKHAPNSDFKGGSPEENLAISLNILNGKDQSSRRDVVLLNAGLSLYVAEKVDTIAEGIELATTLIDNGEALEKYHQMRGE</sequence>
<dbReference type="EC" id="2.4.2.18" evidence="1"/>
<dbReference type="EMBL" id="CP000253">
    <property type="protein sequence ID" value="ABD30463.1"/>
    <property type="molecule type" value="Genomic_DNA"/>
</dbReference>
<dbReference type="RefSeq" id="WP_000173832.1">
    <property type="nucleotide sequence ID" value="NZ_LS483365.1"/>
</dbReference>
<dbReference type="RefSeq" id="YP_499895.1">
    <property type="nucleotide sequence ID" value="NC_007795.1"/>
</dbReference>
<dbReference type="SMR" id="Q2FYR7"/>
<dbReference type="STRING" id="93061.SAOUHSC_01368"/>
<dbReference type="PaxDb" id="1280-SAXN108_1385"/>
<dbReference type="GeneID" id="3920777"/>
<dbReference type="KEGG" id="sao:SAOUHSC_01368"/>
<dbReference type="PATRIC" id="fig|93061.5.peg.1252"/>
<dbReference type="eggNOG" id="COG0547">
    <property type="taxonomic scope" value="Bacteria"/>
</dbReference>
<dbReference type="HOGENOM" id="CLU_034315_3_0_9"/>
<dbReference type="OrthoDB" id="9806430at2"/>
<dbReference type="UniPathway" id="UPA00035">
    <property type="reaction ID" value="UER00041"/>
</dbReference>
<dbReference type="PRO" id="PR:Q2FYR7"/>
<dbReference type="Proteomes" id="UP000008816">
    <property type="component" value="Chromosome"/>
</dbReference>
<dbReference type="GO" id="GO:0005829">
    <property type="term" value="C:cytosol"/>
    <property type="evidence" value="ECO:0000318"/>
    <property type="project" value="GO_Central"/>
</dbReference>
<dbReference type="GO" id="GO:0004048">
    <property type="term" value="F:anthranilate phosphoribosyltransferase activity"/>
    <property type="evidence" value="ECO:0007669"/>
    <property type="project" value="UniProtKB-UniRule"/>
</dbReference>
<dbReference type="GO" id="GO:0000287">
    <property type="term" value="F:magnesium ion binding"/>
    <property type="evidence" value="ECO:0007669"/>
    <property type="project" value="UniProtKB-UniRule"/>
</dbReference>
<dbReference type="GO" id="GO:0000162">
    <property type="term" value="P:L-tryptophan biosynthetic process"/>
    <property type="evidence" value="ECO:0000318"/>
    <property type="project" value="GO_Central"/>
</dbReference>
<dbReference type="FunFam" id="3.40.1030.10:FF:000009">
    <property type="entry name" value="Anthranilate phosphoribosyltransferase"/>
    <property type="match status" value="1"/>
</dbReference>
<dbReference type="Gene3D" id="3.40.1030.10">
    <property type="entry name" value="Nucleoside phosphorylase/phosphoribosyltransferase catalytic domain"/>
    <property type="match status" value="1"/>
</dbReference>
<dbReference type="HAMAP" id="MF_00211">
    <property type="entry name" value="TrpD"/>
    <property type="match status" value="1"/>
</dbReference>
<dbReference type="InterPro" id="IPR005940">
    <property type="entry name" value="Anthranilate_Pribosyl_Tfrase"/>
</dbReference>
<dbReference type="InterPro" id="IPR000312">
    <property type="entry name" value="Glycosyl_Trfase_fam3"/>
</dbReference>
<dbReference type="InterPro" id="IPR035902">
    <property type="entry name" value="Nuc_phospho_transferase"/>
</dbReference>
<dbReference type="NCBIfam" id="TIGR01245">
    <property type="entry name" value="trpD"/>
    <property type="match status" value="1"/>
</dbReference>
<dbReference type="PANTHER" id="PTHR43285">
    <property type="entry name" value="ANTHRANILATE PHOSPHORIBOSYLTRANSFERASE"/>
    <property type="match status" value="1"/>
</dbReference>
<dbReference type="PANTHER" id="PTHR43285:SF2">
    <property type="entry name" value="ANTHRANILATE PHOSPHORIBOSYLTRANSFERASE"/>
    <property type="match status" value="1"/>
</dbReference>
<dbReference type="Pfam" id="PF00591">
    <property type="entry name" value="Glycos_transf_3"/>
    <property type="match status" value="1"/>
</dbReference>
<dbReference type="SUPFAM" id="SSF52418">
    <property type="entry name" value="Nucleoside phosphorylase/phosphoribosyltransferase catalytic domain"/>
    <property type="match status" value="1"/>
</dbReference>
<feature type="chain" id="PRO_1000099843" description="Anthranilate phosphoribosyltransferase">
    <location>
        <begin position="1"/>
        <end position="332"/>
    </location>
</feature>
<feature type="binding site" evidence="1">
    <location>
        <position position="78"/>
    </location>
    <ligand>
        <name>5-phospho-alpha-D-ribose 1-diphosphate</name>
        <dbReference type="ChEBI" id="CHEBI:58017"/>
    </ligand>
</feature>
<feature type="binding site" evidence="1">
    <location>
        <position position="78"/>
    </location>
    <ligand>
        <name>anthranilate</name>
        <dbReference type="ChEBI" id="CHEBI:16567"/>
        <label>1</label>
    </ligand>
</feature>
<feature type="binding site" evidence="1">
    <location>
        <begin position="81"/>
        <end position="82"/>
    </location>
    <ligand>
        <name>5-phospho-alpha-D-ribose 1-diphosphate</name>
        <dbReference type="ChEBI" id="CHEBI:58017"/>
    </ligand>
</feature>
<feature type="binding site" evidence="1">
    <location>
        <position position="86"/>
    </location>
    <ligand>
        <name>5-phospho-alpha-D-ribose 1-diphosphate</name>
        <dbReference type="ChEBI" id="CHEBI:58017"/>
    </ligand>
</feature>
<feature type="binding site" evidence="1">
    <location>
        <begin position="88"/>
        <end position="91"/>
    </location>
    <ligand>
        <name>5-phospho-alpha-D-ribose 1-diphosphate</name>
        <dbReference type="ChEBI" id="CHEBI:58017"/>
    </ligand>
</feature>
<feature type="binding site" evidence="1">
    <location>
        <position position="90"/>
    </location>
    <ligand>
        <name>Mg(2+)</name>
        <dbReference type="ChEBI" id="CHEBI:18420"/>
        <label>1</label>
    </ligand>
</feature>
<feature type="binding site" evidence="1">
    <location>
        <begin position="106"/>
        <end position="114"/>
    </location>
    <ligand>
        <name>5-phospho-alpha-D-ribose 1-diphosphate</name>
        <dbReference type="ChEBI" id="CHEBI:58017"/>
    </ligand>
</feature>
<feature type="binding site" evidence="1">
    <location>
        <position position="109"/>
    </location>
    <ligand>
        <name>anthranilate</name>
        <dbReference type="ChEBI" id="CHEBI:16567"/>
        <label>1</label>
    </ligand>
</feature>
<feature type="binding site" evidence="1">
    <location>
        <position position="118"/>
    </location>
    <ligand>
        <name>5-phospho-alpha-D-ribose 1-diphosphate</name>
        <dbReference type="ChEBI" id="CHEBI:58017"/>
    </ligand>
</feature>
<feature type="binding site" evidence="1">
    <location>
        <position position="163"/>
    </location>
    <ligand>
        <name>anthranilate</name>
        <dbReference type="ChEBI" id="CHEBI:16567"/>
        <label>2</label>
    </ligand>
</feature>
<feature type="binding site" evidence="1">
    <location>
        <position position="222"/>
    </location>
    <ligand>
        <name>Mg(2+)</name>
        <dbReference type="ChEBI" id="CHEBI:18420"/>
        <label>2</label>
    </ligand>
</feature>
<feature type="binding site" evidence="1">
    <location>
        <position position="223"/>
    </location>
    <ligand>
        <name>Mg(2+)</name>
        <dbReference type="ChEBI" id="CHEBI:18420"/>
        <label>1</label>
    </ligand>
</feature>
<feature type="binding site" evidence="1">
    <location>
        <position position="223"/>
    </location>
    <ligand>
        <name>Mg(2+)</name>
        <dbReference type="ChEBI" id="CHEBI:18420"/>
        <label>2</label>
    </ligand>
</feature>
<protein>
    <recommendedName>
        <fullName evidence="1">Anthranilate phosphoribosyltransferase</fullName>
        <ecNumber evidence="1">2.4.2.18</ecNumber>
    </recommendedName>
</protein>